<name>CSPA_RHIME</name>
<organism>
    <name type="scientific">Rhizobium meliloti (strain 1021)</name>
    <name type="common">Ensifer meliloti</name>
    <name type="synonym">Sinorhizobium meliloti</name>
    <dbReference type="NCBI Taxonomy" id="266834"/>
    <lineage>
        <taxon>Bacteria</taxon>
        <taxon>Pseudomonadati</taxon>
        <taxon>Pseudomonadota</taxon>
        <taxon>Alphaproteobacteria</taxon>
        <taxon>Hyphomicrobiales</taxon>
        <taxon>Rhizobiaceae</taxon>
        <taxon>Sinorhizobium/Ensifer group</taxon>
        <taxon>Sinorhizobium</taxon>
    </lineage>
</organism>
<dbReference type="EMBL" id="AF030523">
    <property type="protein sequence ID" value="AAC64672.1"/>
    <property type="molecule type" value="Genomic_DNA"/>
</dbReference>
<dbReference type="EMBL" id="AL591688">
    <property type="protein sequence ID" value="CAC46636.1"/>
    <property type="molecule type" value="Genomic_DNA"/>
</dbReference>
<dbReference type="RefSeq" id="NP_386163.1">
    <property type="nucleotide sequence ID" value="NC_003047.1"/>
</dbReference>
<dbReference type="RefSeq" id="WP_003537120.1">
    <property type="nucleotide sequence ID" value="NC_003047.1"/>
</dbReference>
<dbReference type="SMR" id="Q9Z3S6"/>
<dbReference type="EnsemblBacteria" id="CAC46636">
    <property type="protein sequence ID" value="CAC46636"/>
    <property type="gene ID" value="SMc04318"/>
</dbReference>
<dbReference type="KEGG" id="sme:SMc04318"/>
<dbReference type="PATRIC" id="fig|266834.11.peg.3511"/>
<dbReference type="eggNOG" id="COG1278">
    <property type="taxonomic scope" value="Bacteria"/>
</dbReference>
<dbReference type="HOGENOM" id="CLU_117621_4_1_5"/>
<dbReference type="OrthoDB" id="9801074at2"/>
<dbReference type="Proteomes" id="UP000001976">
    <property type="component" value="Chromosome"/>
</dbReference>
<dbReference type="GO" id="GO:0005829">
    <property type="term" value="C:cytosol"/>
    <property type="evidence" value="ECO:0007669"/>
    <property type="project" value="UniProtKB-ARBA"/>
</dbReference>
<dbReference type="GO" id="GO:0003677">
    <property type="term" value="F:DNA binding"/>
    <property type="evidence" value="ECO:0007669"/>
    <property type="project" value="UniProtKB-KW"/>
</dbReference>
<dbReference type="CDD" id="cd04458">
    <property type="entry name" value="CSP_CDS"/>
    <property type="match status" value="1"/>
</dbReference>
<dbReference type="FunFam" id="2.40.50.140:FF:000006">
    <property type="entry name" value="Cold shock protein CspC"/>
    <property type="match status" value="1"/>
</dbReference>
<dbReference type="Gene3D" id="2.40.50.140">
    <property type="entry name" value="Nucleic acid-binding proteins"/>
    <property type="match status" value="1"/>
</dbReference>
<dbReference type="InterPro" id="IPR012156">
    <property type="entry name" value="Cold_shock_CspA"/>
</dbReference>
<dbReference type="InterPro" id="IPR050181">
    <property type="entry name" value="Cold_shock_domain"/>
</dbReference>
<dbReference type="InterPro" id="IPR011129">
    <property type="entry name" value="CSD"/>
</dbReference>
<dbReference type="InterPro" id="IPR019844">
    <property type="entry name" value="CSD_CS"/>
</dbReference>
<dbReference type="InterPro" id="IPR002059">
    <property type="entry name" value="CSP_DNA-bd"/>
</dbReference>
<dbReference type="InterPro" id="IPR012340">
    <property type="entry name" value="NA-bd_OB-fold"/>
</dbReference>
<dbReference type="PANTHER" id="PTHR11544">
    <property type="entry name" value="COLD SHOCK DOMAIN CONTAINING PROTEINS"/>
    <property type="match status" value="1"/>
</dbReference>
<dbReference type="Pfam" id="PF00313">
    <property type="entry name" value="CSD"/>
    <property type="match status" value="1"/>
</dbReference>
<dbReference type="PIRSF" id="PIRSF002599">
    <property type="entry name" value="Cold_shock_A"/>
    <property type="match status" value="1"/>
</dbReference>
<dbReference type="PRINTS" id="PR00050">
    <property type="entry name" value="COLDSHOCK"/>
</dbReference>
<dbReference type="SMART" id="SM00357">
    <property type="entry name" value="CSP"/>
    <property type="match status" value="1"/>
</dbReference>
<dbReference type="SUPFAM" id="SSF50249">
    <property type="entry name" value="Nucleic acid-binding proteins"/>
    <property type="match status" value="1"/>
</dbReference>
<dbReference type="PROSITE" id="PS00352">
    <property type="entry name" value="CSD_1"/>
    <property type="match status" value="1"/>
</dbReference>
<dbReference type="PROSITE" id="PS51857">
    <property type="entry name" value="CSD_2"/>
    <property type="match status" value="1"/>
</dbReference>
<gene>
    <name type="primary">cspA</name>
    <name type="ordered locus">R02057</name>
    <name type="ORF">SMc04318</name>
</gene>
<protein>
    <recommendedName>
        <fullName>Cold shock protein CspA</fullName>
    </recommendedName>
</protein>
<keyword id="KW-0010">Activator</keyword>
<keyword id="KW-0963">Cytoplasm</keyword>
<keyword id="KW-0238">DNA-binding</keyword>
<keyword id="KW-1185">Reference proteome</keyword>
<keyword id="KW-0346">Stress response</keyword>
<keyword id="KW-0804">Transcription</keyword>
<keyword id="KW-0805">Transcription regulation</keyword>
<feature type="chain" id="PRO_0000100322" description="Cold shock protein CspA">
    <location>
        <begin position="1"/>
        <end position="69"/>
    </location>
</feature>
<feature type="domain" description="CSD">
    <location>
        <begin position="4"/>
        <end position="66"/>
    </location>
</feature>
<accession>Q9Z3S6</accession>
<proteinExistence type="evidence at transcript level"/>
<reference key="1">
    <citation type="journal article" date="2000" name="Appl. Environ. Microbiol.">
        <title>Transcriptional organization and regulation of a polycistronic cold shock operon in Sinorhizobium meliloti RM1021 encoding homologs of the Escherichia coli major cold shock gene cspA and ribosomal protein gene rpsU.</title>
        <authorList>
            <person name="O'Connell K.P."/>
            <person name="Thomashow M.F."/>
        </authorList>
    </citation>
    <scope>NUCLEOTIDE SEQUENCE [GENOMIC DNA]</scope>
    <source>
        <strain>1021</strain>
    </source>
</reference>
<reference key="2">
    <citation type="journal article" date="2001" name="Proc. Natl. Acad. Sci. U.S.A.">
        <title>Analysis of the chromosome sequence of the legume symbiont Sinorhizobium meliloti strain 1021.</title>
        <authorList>
            <person name="Capela D."/>
            <person name="Barloy-Hubler F."/>
            <person name="Gouzy J."/>
            <person name="Bothe G."/>
            <person name="Ampe F."/>
            <person name="Batut J."/>
            <person name="Boistard P."/>
            <person name="Becker A."/>
            <person name="Boutry M."/>
            <person name="Cadieu E."/>
            <person name="Dreano S."/>
            <person name="Gloux S."/>
            <person name="Godrie T."/>
            <person name="Goffeau A."/>
            <person name="Kahn D."/>
            <person name="Kiss E."/>
            <person name="Lelaure V."/>
            <person name="Masuy D."/>
            <person name="Pohl T."/>
            <person name="Portetelle D."/>
            <person name="Puehler A."/>
            <person name="Purnelle B."/>
            <person name="Ramsperger U."/>
            <person name="Renard C."/>
            <person name="Thebault P."/>
            <person name="Vandenbol M."/>
            <person name="Weidner S."/>
            <person name="Galibert F."/>
        </authorList>
    </citation>
    <scope>NUCLEOTIDE SEQUENCE [LARGE SCALE GENOMIC DNA]</scope>
    <source>
        <strain>1021</strain>
    </source>
</reference>
<reference key="3">
    <citation type="journal article" date="2001" name="Science">
        <title>The composite genome of the legume symbiont Sinorhizobium meliloti.</title>
        <authorList>
            <person name="Galibert F."/>
            <person name="Finan T.M."/>
            <person name="Long S.R."/>
            <person name="Puehler A."/>
            <person name="Abola P."/>
            <person name="Ampe F."/>
            <person name="Barloy-Hubler F."/>
            <person name="Barnett M.J."/>
            <person name="Becker A."/>
            <person name="Boistard P."/>
            <person name="Bothe G."/>
            <person name="Boutry M."/>
            <person name="Bowser L."/>
            <person name="Buhrmester J."/>
            <person name="Cadieu E."/>
            <person name="Capela D."/>
            <person name="Chain P."/>
            <person name="Cowie A."/>
            <person name="Davis R.W."/>
            <person name="Dreano S."/>
            <person name="Federspiel N.A."/>
            <person name="Fisher R.F."/>
            <person name="Gloux S."/>
            <person name="Godrie T."/>
            <person name="Goffeau A."/>
            <person name="Golding B."/>
            <person name="Gouzy J."/>
            <person name="Gurjal M."/>
            <person name="Hernandez-Lucas I."/>
            <person name="Hong A."/>
            <person name="Huizar L."/>
            <person name="Hyman R.W."/>
            <person name="Jones T."/>
            <person name="Kahn D."/>
            <person name="Kahn M.L."/>
            <person name="Kalman S."/>
            <person name="Keating D.H."/>
            <person name="Kiss E."/>
            <person name="Komp C."/>
            <person name="Lelaure V."/>
            <person name="Masuy D."/>
            <person name="Palm C."/>
            <person name="Peck M.C."/>
            <person name="Pohl T.M."/>
            <person name="Portetelle D."/>
            <person name="Purnelle B."/>
            <person name="Ramsperger U."/>
            <person name="Surzycki R."/>
            <person name="Thebault P."/>
            <person name="Vandenbol M."/>
            <person name="Vorhoelter F.J."/>
            <person name="Weidner S."/>
            <person name="Wells D.H."/>
            <person name="Wong K."/>
            <person name="Yeh K.-C."/>
            <person name="Batut J."/>
        </authorList>
    </citation>
    <scope>NUCLEOTIDE SEQUENCE [LARGE SCALE GENOMIC DNA]</scope>
    <source>
        <strain>1021</strain>
    </source>
</reference>
<sequence length="69" mass="7424">MNSGTVKWFNSTKGFGFIQPDDGATDVFVHASAVERAGMRSLVEGQKVTYDIVRDTKSGKSSADNLRAA</sequence>
<evidence type="ECO:0000250" key="1"/>
<comment type="subcellular location">
    <subcellularLocation>
        <location evidence="1">Cytoplasm</location>
    </subcellularLocation>
</comment>
<comment type="induction">
    <text>By cold shock.</text>
</comment>